<gene>
    <name evidence="1" type="primary">groEL2</name>
    <name evidence="1" type="synonym">groL2</name>
    <name type="ordered locus">FRAAL1699</name>
</gene>
<feature type="chain" id="PRO_0000332003" description="Chaperonin GroEL 2">
    <location>
        <begin position="1"/>
        <end position="542"/>
    </location>
</feature>
<feature type="binding site" evidence="1">
    <location>
        <begin position="29"/>
        <end position="32"/>
    </location>
    <ligand>
        <name>ATP</name>
        <dbReference type="ChEBI" id="CHEBI:30616"/>
    </ligand>
</feature>
<feature type="binding site" evidence="1">
    <location>
        <begin position="86"/>
        <end position="90"/>
    </location>
    <ligand>
        <name>ATP</name>
        <dbReference type="ChEBI" id="CHEBI:30616"/>
    </ligand>
</feature>
<feature type="binding site" evidence="1">
    <location>
        <position position="413"/>
    </location>
    <ligand>
        <name>ATP</name>
        <dbReference type="ChEBI" id="CHEBI:30616"/>
    </ligand>
</feature>
<feature type="binding site" evidence="1">
    <location>
        <begin position="477"/>
        <end position="479"/>
    </location>
    <ligand>
        <name>ATP</name>
        <dbReference type="ChEBI" id="CHEBI:30616"/>
    </ligand>
</feature>
<feature type="binding site" evidence="1">
    <location>
        <position position="493"/>
    </location>
    <ligand>
        <name>ATP</name>
        <dbReference type="ChEBI" id="CHEBI:30616"/>
    </ligand>
</feature>
<name>CH602_FRAAA</name>
<reference key="1">
    <citation type="journal article" date="2007" name="Genome Res.">
        <title>Genome characteristics of facultatively symbiotic Frankia sp. strains reflect host range and host plant biogeography.</title>
        <authorList>
            <person name="Normand P."/>
            <person name="Lapierre P."/>
            <person name="Tisa L.S."/>
            <person name="Gogarten J.P."/>
            <person name="Alloisio N."/>
            <person name="Bagnarol E."/>
            <person name="Bassi C.A."/>
            <person name="Berry A.M."/>
            <person name="Bickhart D.M."/>
            <person name="Choisne N."/>
            <person name="Couloux A."/>
            <person name="Cournoyer B."/>
            <person name="Cruveiller S."/>
            <person name="Daubin V."/>
            <person name="Demange N."/>
            <person name="Francino M.P."/>
            <person name="Goltsman E."/>
            <person name="Huang Y."/>
            <person name="Kopp O.R."/>
            <person name="Labarre L."/>
            <person name="Lapidus A."/>
            <person name="Lavire C."/>
            <person name="Marechal J."/>
            <person name="Martinez M."/>
            <person name="Mastronunzio J.E."/>
            <person name="Mullin B.C."/>
            <person name="Niemann J."/>
            <person name="Pujic P."/>
            <person name="Rawnsley T."/>
            <person name="Rouy Z."/>
            <person name="Schenowitz C."/>
            <person name="Sellstedt A."/>
            <person name="Tavares F."/>
            <person name="Tomkins J.P."/>
            <person name="Vallenet D."/>
            <person name="Valverde C."/>
            <person name="Wall L.G."/>
            <person name="Wang Y."/>
            <person name="Medigue C."/>
            <person name="Benson D.R."/>
        </authorList>
    </citation>
    <scope>NUCLEOTIDE SEQUENCE [LARGE SCALE GENOMIC DNA]</scope>
    <source>
        <strain>DSM 45986 / CECT 9034 / ACN14a</strain>
    </source>
</reference>
<protein>
    <recommendedName>
        <fullName evidence="1">Chaperonin GroEL 2</fullName>
        <ecNumber evidence="1">5.6.1.7</ecNumber>
    </recommendedName>
    <alternativeName>
        <fullName evidence="1">60 kDa chaperonin 2</fullName>
    </alternativeName>
    <alternativeName>
        <fullName evidence="1">Chaperonin-60 2</fullName>
        <shortName evidence="1">Cpn60 2</shortName>
    </alternativeName>
</protein>
<sequence>MAKMIAFDEEARRGLERGMNQLADAVRVTLGPKGRNVVLEKKWGVPTITNDGVSIAKEIELEDPYEKIGAELVKEVAKKTNDVAGDGTTTATILAQALVREGLRNVAAGANPLGLKKGIEVAVERVSEELSKQAKEVETKEQIASTASISAGDSAIGGLIAEALDKVGKEGVVTVEESNTFGLELELTEGMRFDKGYISPYFVTDADRQEAVLDDPYILIVNSKIAAVKDLLPLLEKVMQTSKPLVIISEDVEGEALATLVVNKIRGTFKSVAVKAPGFGDRRKAILGDIAILTGGQVISEDVGLKLESTSLDLLGRARKIVVTKDETTVVEGSGDPDQIAGRVSQIRNEIDKSDSDYDREKLQERLAKLAGGVAVIKVGAATEVELKEKKHRIEDAVSNAKAAVEEGIVAGGGVALLQASITAFEKLDLSGDEATGARIVALALAAPLRQIASNAGFEGGVVVEKVRDLPVGHGLNAATGEYVDLIATGIIDPVKVTRSALQNAASIAGLFLTVEVVVADRPSAGAAEGGDGAGAMAGMGF</sequence>
<proteinExistence type="inferred from homology"/>
<keyword id="KW-0067">ATP-binding</keyword>
<keyword id="KW-0143">Chaperone</keyword>
<keyword id="KW-0963">Cytoplasm</keyword>
<keyword id="KW-0413">Isomerase</keyword>
<keyword id="KW-0547">Nucleotide-binding</keyword>
<keyword id="KW-1185">Reference proteome</keyword>
<comment type="function">
    <text evidence="1">Together with its co-chaperonin GroES, plays an essential role in assisting protein folding. The GroEL-GroES system forms a nano-cage that allows encapsulation of the non-native substrate proteins and provides a physical environment optimized to promote and accelerate protein folding.</text>
</comment>
<comment type="catalytic activity">
    <reaction evidence="1">
        <text>ATP + H2O + a folded polypeptide = ADP + phosphate + an unfolded polypeptide.</text>
        <dbReference type="EC" id="5.6.1.7"/>
    </reaction>
</comment>
<comment type="subunit">
    <text evidence="1">Forms a cylinder of 14 subunits composed of two heptameric rings stacked back-to-back. Interacts with the co-chaperonin GroES.</text>
</comment>
<comment type="subcellular location">
    <subcellularLocation>
        <location evidence="1">Cytoplasm</location>
    </subcellularLocation>
</comment>
<comment type="similarity">
    <text evidence="1">Belongs to the chaperonin (HSP60) family.</text>
</comment>
<dbReference type="EC" id="5.6.1.7" evidence="1"/>
<dbReference type="EMBL" id="CT573213">
    <property type="protein sequence ID" value="CAJ60352.1"/>
    <property type="molecule type" value="Genomic_DNA"/>
</dbReference>
<dbReference type="RefSeq" id="WP_011602885.1">
    <property type="nucleotide sequence ID" value="NC_008278.1"/>
</dbReference>
<dbReference type="SMR" id="Q0RQ25"/>
<dbReference type="STRING" id="326424.FRAAL1699"/>
<dbReference type="KEGG" id="fal:FRAAL1699"/>
<dbReference type="eggNOG" id="COG0459">
    <property type="taxonomic scope" value="Bacteria"/>
</dbReference>
<dbReference type="HOGENOM" id="CLU_016503_3_0_11"/>
<dbReference type="OrthoDB" id="9766614at2"/>
<dbReference type="Proteomes" id="UP000000657">
    <property type="component" value="Chromosome"/>
</dbReference>
<dbReference type="GO" id="GO:0005737">
    <property type="term" value="C:cytoplasm"/>
    <property type="evidence" value="ECO:0007669"/>
    <property type="project" value="UniProtKB-SubCell"/>
</dbReference>
<dbReference type="GO" id="GO:0005524">
    <property type="term" value="F:ATP binding"/>
    <property type="evidence" value="ECO:0007669"/>
    <property type="project" value="UniProtKB-UniRule"/>
</dbReference>
<dbReference type="GO" id="GO:0140662">
    <property type="term" value="F:ATP-dependent protein folding chaperone"/>
    <property type="evidence" value="ECO:0007669"/>
    <property type="project" value="InterPro"/>
</dbReference>
<dbReference type="GO" id="GO:0016853">
    <property type="term" value="F:isomerase activity"/>
    <property type="evidence" value="ECO:0007669"/>
    <property type="project" value="UniProtKB-KW"/>
</dbReference>
<dbReference type="GO" id="GO:0051082">
    <property type="term" value="F:unfolded protein binding"/>
    <property type="evidence" value="ECO:0007669"/>
    <property type="project" value="UniProtKB-UniRule"/>
</dbReference>
<dbReference type="GO" id="GO:0042026">
    <property type="term" value="P:protein refolding"/>
    <property type="evidence" value="ECO:0007669"/>
    <property type="project" value="UniProtKB-UniRule"/>
</dbReference>
<dbReference type="CDD" id="cd03344">
    <property type="entry name" value="GroEL"/>
    <property type="match status" value="1"/>
</dbReference>
<dbReference type="FunFam" id="3.50.7.10:FF:000001">
    <property type="entry name" value="60 kDa chaperonin"/>
    <property type="match status" value="1"/>
</dbReference>
<dbReference type="Gene3D" id="3.50.7.10">
    <property type="entry name" value="GroEL"/>
    <property type="match status" value="1"/>
</dbReference>
<dbReference type="Gene3D" id="1.10.560.10">
    <property type="entry name" value="GroEL-like equatorial domain"/>
    <property type="match status" value="1"/>
</dbReference>
<dbReference type="Gene3D" id="3.30.260.10">
    <property type="entry name" value="TCP-1-like chaperonin intermediate domain"/>
    <property type="match status" value="1"/>
</dbReference>
<dbReference type="HAMAP" id="MF_00600">
    <property type="entry name" value="CH60"/>
    <property type="match status" value="1"/>
</dbReference>
<dbReference type="InterPro" id="IPR018370">
    <property type="entry name" value="Chaperonin_Cpn60_CS"/>
</dbReference>
<dbReference type="InterPro" id="IPR001844">
    <property type="entry name" value="Cpn60/GroEL"/>
</dbReference>
<dbReference type="InterPro" id="IPR002423">
    <property type="entry name" value="Cpn60/GroEL/TCP-1"/>
</dbReference>
<dbReference type="InterPro" id="IPR027409">
    <property type="entry name" value="GroEL-like_apical_dom_sf"/>
</dbReference>
<dbReference type="InterPro" id="IPR027413">
    <property type="entry name" value="GROEL-like_equatorial_sf"/>
</dbReference>
<dbReference type="InterPro" id="IPR027410">
    <property type="entry name" value="TCP-1-like_intermed_sf"/>
</dbReference>
<dbReference type="NCBIfam" id="TIGR02348">
    <property type="entry name" value="GroEL"/>
    <property type="match status" value="1"/>
</dbReference>
<dbReference type="NCBIfam" id="NF000592">
    <property type="entry name" value="PRK00013.1"/>
    <property type="match status" value="1"/>
</dbReference>
<dbReference type="NCBIfam" id="NF009487">
    <property type="entry name" value="PRK12849.1"/>
    <property type="match status" value="1"/>
</dbReference>
<dbReference type="NCBIfam" id="NF009488">
    <property type="entry name" value="PRK12850.1"/>
    <property type="match status" value="1"/>
</dbReference>
<dbReference type="NCBIfam" id="NF009489">
    <property type="entry name" value="PRK12851.1"/>
    <property type="match status" value="1"/>
</dbReference>
<dbReference type="PANTHER" id="PTHR45633">
    <property type="entry name" value="60 KDA HEAT SHOCK PROTEIN, MITOCHONDRIAL"/>
    <property type="match status" value="1"/>
</dbReference>
<dbReference type="Pfam" id="PF00118">
    <property type="entry name" value="Cpn60_TCP1"/>
    <property type="match status" value="1"/>
</dbReference>
<dbReference type="PRINTS" id="PR00298">
    <property type="entry name" value="CHAPERONIN60"/>
</dbReference>
<dbReference type="SUPFAM" id="SSF52029">
    <property type="entry name" value="GroEL apical domain-like"/>
    <property type="match status" value="1"/>
</dbReference>
<dbReference type="SUPFAM" id="SSF48592">
    <property type="entry name" value="GroEL equatorial domain-like"/>
    <property type="match status" value="1"/>
</dbReference>
<dbReference type="SUPFAM" id="SSF54849">
    <property type="entry name" value="GroEL-intermediate domain like"/>
    <property type="match status" value="1"/>
</dbReference>
<dbReference type="PROSITE" id="PS00296">
    <property type="entry name" value="CHAPERONINS_CPN60"/>
    <property type="match status" value="1"/>
</dbReference>
<evidence type="ECO:0000255" key="1">
    <source>
        <dbReference type="HAMAP-Rule" id="MF_00600"/>
    </source>
</evidence>
<accession>Q0RQ25</accession>
<organism>
    <name type="scientific">Frankia alni (strain DSM 45986 / CECT 9034 / ACN14a)</name>
    <dbReference type="NCBI Taxonomy" id="326424"/>
    <lineage>
        <taxon>Bacteria</taxon>
        <taxon>Bacillati</taxon>
        <taxon>Actinomycetota</taxon>
        <taxon>Actinomycetes</taxon>
        <taxon>Frankiales</taxon>
        <taxon>Frankiaceae</taxon>
        <taxon>Frankia</taxon>
    </lineage>
</organism>